<feature type="chain" id="PRO_0000077309" description="Type II restriction enzyme HgaI">
    <location>
        <begin position="1"/>
        <end position="488"/>
    </location>
</feature>
<proteinExistence type="evidence at protein level"/>
<organism>
    <name type="scientific">Avibacterium volantium</name>
    <name type="common">Pasteurella volantium</name>
    <dbReference type="NCBI Taxonomy" id="762"/>
    <lineage>
        <taxon>Bacteria</taxon>
        <taxon>Pseudomonadati</taxon>
        <taxon>Pseudomonadota</taxon>
        <taxon>Gammaproteobacteria</taxon>
        <taxon>Pasteurellales</taxon>
        <taxon>Pasteurellaceae</taxon>
        <taxon>Avibacterium</taxon>
    </lineage>
</organism>
<gene>
    <name type="primary">hgaIR</name>
</gene>
<comment type="function">
    <text evidence="1 2">An S subtype restriction enzyme that recognizes the double-stranded sequences 5'-GACGC-3' and 5'-GCGTC-3' and cleaves respectively 10 bases after G-1 and 10 bases before G'-1.</text>
</comment>
<comment type="catalytic activity">
    <reaction evidence="4">
        <text>Endonucleolytic cleavage of DNA to give specific double-stranded fragments with terminal 5'-phosphates.</text>
        <dbReference type="EC" id="3.1.21.4"/>
    </reaction>
</comment>
<protein>
    <recommendedName>
        <fullName evidence="3">Type II restriction enzyme HgaI</fullName>
        <shortName evidence="3">R.HgaI</shortName>
        <ecNumber evidence="4">3.1.21.4</ecNumber>
    </recommendedName>
    <alternativeName>
        <fullName evidence="3">Endonuclease HgaI</fullName>
    </alternativeName>
    <alternativeName>
        <fullName>Type-2 restriction enzyme HgaI</fullName>
    </alternativeName>
</protein>
<evidence type="ECO:0000269" key="1">
    <source ref="1"/>
</evidence>
<evidence type="ECO:0000303" key="2">
    <source>
    </source>
</evidence>
<evidence type="ECO:0000303" key="3">
    <source ref="1"/>
</evidence>
<evidence type="ECO:0000305" key="4">
    <source ref="1"/>
</evidence>
<name>T2G1_AVIVO</name>
<dbReference type="EC" id="3.1.21.4" evidence="4"/>
<dbReference type="EMBL" id="D17388">
    <property type="protein sequence ID" value="BAA04208.1"/>
    <property type="molecule type" value="Genomic_DNA"/>
</dbReference>
<dbReference type="PIR" id="C59240">
    <property type="entry name" value="C59240"/>
</dbReference>
<dbReference type="PRO" id="PR:P43418"/>
<dbReference type="GO" id="GO:0009036">
    <property type="term" value="F:type II site-specific deoxyribonuclease activity"/>
    <property type="evidence" value="ECO:0007669"/>
    <property type="project" value="UniProtKB-EC"/>
</dbReference>
<dbReference type="GO" id="GO:0009307">
    <property type="term" value="P:DNA restriction-modification system"/>
    <property type="evidence" value="ECO:0007669"/>
    <property type="project" value="UniProtKB-KW"/>
</dbReference>
<accession>P43418</accession>
<reference key="1">
    <citation type="journal article" date="1993" name="Bull. Inst. Chem. Res., Kyoto Univ.">
        <title>Nucleotide sequence of the gene of HgaI restriction endonuclease.</title>
        <authorList>
            <person name="Sugisaki H."/>
        </authorList>
    </citation>
    <scope>NUCLEOTIDE SEQUENCE [GENOMIC DNA]</scope>
    <scope>FUNCTION</scope>
    <scope>CATALYTIC ACTIVITY</scope>
    <source>
        <strain>ATCC 14385 / DSM 22841 / CCUG 3713 / NCTC 3438 / Lovell 6</strain>
    </source>
</reference>
<reference key="2">
    <citation type="journal article" date="2003" name="Nucleic Acids Res.">
        <title>A nomenclature for restriction enzymes, DNA methyltransferases, homing endonucleases and their genes.</title>
        <authorList>
            <person name="Roberts R.J."/>
            <person name="Belfort M."/>
            <person name="Bestor T."/>
            <person name="Bhagwat A.S."/>
            <person name="Bickle T.A."/>
            <person name="Bitinaite J."/>
            <person name="Blumenthal R.M."/>
            <person name="Degtyarev S.K."/>
            <person name="Dryden D.T."/>
            <person name="Dybvig K."/>
            <person name="Firman K."/>
            <person name="Gromova E.S."/>
            <person name="Gumport R.I."/>
            <person name="Halford S.E."/>
            <person name="Hattman S."/>
            <person name="Heitman J."/>
            <person name="Hornby D.P."/>
            <person name="Janulaitis A."/>
            <person name="Jeltsch A."/>
            <person name="Josephsen J."/>
            <person name="Kiss A."/>
            <person name="Klaenhammer T.R."/>
            <person name="Kobayashi I."/>
            <person name="Kong H."/>
            <person name="Krueger D.H."/>
            <person name="Lacks S."/>
            <person name="Marinus M.G."/>
            <person name="Miyahara M."/>
            <person name="Morgan R.D."/>
            <person name="Murray N.E."/>
            <person name="Nagaraja V."/>
            <person name="Piekarowicz A."/>
            <person name="Pingoud A."/>
            <person name="Raleigh E."/>
            <person name="Rao D.N."/>
            <person name="Reich N."/>
            <person name="Repin V.E."/>
            <person name="Selker E.U."/>
            <person name="Shaw P.C."/>
            <person name="Stein D.C."/>
            <person name="Stoddard B.L."/>
            <person name="Szybalski W."/>
            <person name="Trautner T.A."/>
            <person name="Van Etten J.L."/>
            <person name="Vitor J.M."/>
            <person name="Wilson G.G."/>
            <person name="Xu S.Y."/>
        </authorList>
    </citation>
    <scope>NOMENCLATURE</scope>
    <scope>SUBTYPE</scope>
</reference>
<sequence length="488" mass="56737">MEKILMLNDDQIWIFKKHTNNIQLLIEVALYLKSNKSSVSKKDKDAMYDIFSESELYNPRESLRDKPLDTINHKLDGLSYFMFGYSDRINDENKFIFSPLGNLFLKYLHDKDKLSKIFSCMLISMQFPHPYSKPSECFLLYPFRLIFKLLLDKRLQGRLYHYEVYKIIIHTISIDEAKYEFLVKSILNSRKKSWNEKLNELSEIQHKVVKSVYEWQYYIVPLLGSLHIFKINNGDIEQKLYHPQKDGSKSPPTARKANNGYVEINDNLTNFIDKLLNKYSFLDTPILLSDSQRKSNDVTKEIYSFYPELLLAEIGETISFESHILNIPKLITEYSKNPDNSTSGKFEKILEEAFNLFIDVEAQWLAGAGRTDIECMYLPINEKFSIEAKSTKNKLSMINSGRLKRHRTLISANYTIVITPRYVPSVRYDIEAQDIVLITADTLAEYLYNNIISNNRDISYADIQAIIVANLGKDISTQISNLTLSKFG</sequence>
<keyword id="KW-0255">Endonuclease</keyword>
<keyword id="KW-0378">Hydrolase</keyword>
<keyword id="KW-0540">Nuclease</keyword>
<keyword id="KW-0680">Restriction system</keyword>